<name>RSMJ_ALKEH</name>
<comment type="function">
    <text evidence="1">Specifically methylates the guanosine in position 1516 of 16S rRNA.</text>
</comment>
<comment type="catalytic activity">
    <reaction evidence="1">
        <text>guanosine(1516) in 16S rRNA + S-adenosyl-L-methionine = N(2)-methylguanosine(1516) in 16S rRNA + S-adenosyl-L-homocysteine + H(+)</text>
        <dbReference type="Rhea" id="RHEA:43220"/>
        <dbReference type="Rhea" id="RHEA-COMP:10412"/>
        <dbReference type="Rhea" id="RHEA-COMP:10413"/>
        <dbReference type="ChEBI" id="CHEBI:15378"/>
        <dbReference type="ChEBI" id="CHEBI:57856"/>
        <dbReference type="ChEBI" id="CHEBI:59789"/>
        <dbReference type="ChEBI" id="CHEBI:74269"/>
        <dbReference type="ChEBI" id="CHEBI:74481"/>
        <dbReference type="EC" id="2.1.1.242"/>
    </reaction>
</comment>
<comment type="subcellular location">
    <subcellularLocation>
        <location evidence="1">Cytoplasm</location>
    </subcellularLocation>
</comment>
<comment type="similarity">
    <text evidence="1">Belongs to the methyltransferase superfamily. RsmJ family.</text>
</comment>
<keyword id="KW-0963">Cytoplasm</keyword>
<keyword id="KW-0489">Methyltransferase</keyword>
<keyword id="KW-1185">Reference proteome</keyword>
<keyword id="KW-0698">rRNA processing</keyword>
<keyword id="KW-0949">S-adenosyl-L-methionine</keyword>
<keyword id="KW-0808">Transferase</keyword>
<feature type="chain" id="PRO_0000292625" description="Ribosomal RNA small subunit methyltransferase J">
    <location>
        <begin position="1"/>
        <end position="264"/>
    </location>
</feature>
<feature type="binding site" evidence="1">
    <location>
        <begin position="111"/>
        <end position="112"/>
    </location>
    <ligand>
        <name>S-adenosyl-L-methionine</name>
        <dbReference type="ChEBI" id="CHEBI:59789"/>
    </ligand>
</feature>
<feature type="binding site" evidence="1">
    <location>
        <begin position="127"/>
        <end position="128"/>
    </location>
    <ligand>
        <name>S-adenosyl-L-methionine</name>
        <dbReference type="ChEBI" id="CHEBI:59789"/>
    </ligand>
</feature>
<feature type="binding site" evidence="1">
    <location>
        <position position="180"/>
    </location>
    <ligand>
        <name>S-adenosyl-L-methionine</name>
        <dbReference type="ChEBI" id="CHEBI:59789"/>
    </ligand>
</feature>
<dbReference type="EC" id="2.1.1.242" evidence="1"/>
<dbReference type="EMBL" id="CP000453">
    <property type="protein sequence ID" value="ABI57582.1"/>
    <property type="molecule type" value="Genomic_DNA"/>
</dbReference>
<dbReference type="RefSeq" id="WP_011629976.1">
    <property type="nucleotide sequence ID" value="NC_008340.1"/>
</dbReference>
<dbReference type="SMR" id="Q0A6F5"/>
<dbReference type="KEGG" id="aeh:Mlg_2240"/>
<dbReference type="eggNOG" id="COG0742">
    <property type="taxonomic scope" value="Bacteria"/>
</dbReference>
<dbReference type="HOGENOM" id="CLU_076324_0_1_6"/>
<dbReference type="OrthoDB" id="3191794at2"/>
<dbReference type="Proteomes" id="UP000001962">
    <property type="component" value="Chromosome"/>
</dbReference>
<dbReference type="GO" id="GO:0005737">
    <property type="term" value="C:cytoplasm"/>
    <property type="evidence" value="ECO:0007669"/>
    <property type="project" value="UniProtKB-SubCell"/>
</dbReference>
<dbReference type="GO" id="GO:0008990">
    <property type="term" value="F:rRNA (guanine-N2-)-methyltransferase activity"/>
    <property type="evidence" value="ECO:0007669"/>
    <property type="project" value="UniProtKB-UniRule"/>
</dbReference>
<dbReference type="CDD" id="cd02440">
    <property type="entry name" value="AdoMet_MTases"/>
    <property type="match status" value="1"/>
</dbReference>
<dbReference type="Gene3D" id="3.40.50.150">
    <property type="entry name" value="Vaccinia Virus protein VP39"/>
    <property type="match status" value="1"/>
</dbReference>
<dbReference type="HAMAP" id="MF_01523">
    <property type="entry name" value="16SrRNA_methyltr_J"/>
    <property type="match status" value="1"/>
</dbReference>
<dbReference type="InterPro" id="IPR007536">
    <property type="entry name" value="16SrRNA_methylTrfase_J"/>
</dbReference>
<dbReference type="InterPro" id="IPR029063">
    <property type="entry name" value="SAM-dependent_MTases_sf"/>
</dbReference>
<dbReference type="PANTHER" id="PTHR36112">
    <property type="entry name" value="RIBOSOMAL RNA SMALL SUBUNIT METHYLTRANSFERASE J"/>
    <property type="match status" value="1"/>
</dbReference>
<dbReference type="PANTHER" id="PTHR36112:SF1">
    <property type="entry name" value="RIBOSOMAL RNA SMALL SUBUNIT METHYLTRANSFERASE J"/>
    <property type="match status" value="1"/>
</dbReference>
<dbReference type="Pfam" id="PF04445">
    <property type="entry name" value="SAM_MT"/>
    <property type="match status" value="1"/>
</dbReference>
<dbReference type="SUPFAM" id="SSF53335">
    <property type="entry name" value="S-adenosyl-L-methionine-dependent methyltransferases"/>
    <property type="match status" value="1"/>
</dbReference>
<proteinExistence type="inferred from homology"/>
<accession>Q0A6F5</accession>
<reference key="1">
    <citation type="submission" date="2006-08" db="EMBL/GenBank/DDBJ databases">
        <title>Complete sequence of Alkalilimnicola ehrilichei MLHE-1.</title>
        <authorList>
            <person name="Copeland A."/>
            <person name="Lucas S."/>
            <person name="Lapidus A."/>
            <person name="Barry K."/>
            <person name="Detter J.C."/>
            <person name="Glavina del Rio T."/>
            <person name="Hammon N."/>
            <person name="Israni S."/>
            <person name="Dalin E."/>
            <person name="Tice H."/>
            <person name="Pitluck S."/>
            <person name="Sims D."/>
            <person name="Brettin T."/>
            <person name="Bruce D."/>
            <person name="Han C."/>
            <person name="Tapia R."/>
            <person name="Gilna P."/>
            <person name="Schmutz J."/>
            <person name="Larimer F."/>
            <person name="Land M."/>
            <person name="Hauser L."/>
            <person name="Kyrpides N."/>
            <person name="Mikhailova N."/>
            <person name="Oremland R.S."/>
            <person name="Hoeft S.E."/>
            <person name="Switzer-Blum J."/>
            <person name="Kulp T."/>
            <person name="King G."/>
            <person name="Tabita R."/>
            <person name="Witte B."/>
            <person name="Santini J.M."/>
            <person name="Basu P."/>
            <person name="Hollibaugh J.T."/>
            <person name="Xie G."/>
            <person name="Stolz J.F."/>
            <person name="Richardson P."/>
        </authorList>
    </citation>
    <scope>NUCLEOTIDE SEQUENCE [LARGE SCALE GENOMIC DNA]</scope>
    <source>
        <strain>ATCC BAA-1101 / DSM 17681 / MLHE-1</strain>
    </source>
</reference>
<organism>
    <name type="scientific">Alkalilimnicola ehrlichii (strain ATCC BAA-1101 / DSM 17681 / MLHE-1)</name>
    <dbReference type="NCBI Taxonomy" id="187272"/>
    <lineage>
        <taxon>Bacteria</taxon>
        <taxon>Pseudomonadati</taxon>
        <taxon>Pseudomonadota</taxon>
        <taxon>Gammaproteobacteria</taxon>
        <taxon>Chromatiales</taxon>
        <taxon>Ectothiorhodospiraceae</taxon>
        <taxon>Alkalilimnicola</taxon>
    </lineage>
</organism>
<evidence type="ECO:0000255" key="1">
    <source>
        <dbReference type="HAMAP-Rule" id="MF_01523"/>
    </source>
</evidence>
<sequence>MINRNHRPLRGVLSDPDEPAAAAALAHRLDLPLLTEPPETPALFLHHSRNGLALRSSGSNAPGPIRVSLDEGRQGQRLRQASLKRETLARACGLRGGRSLRIVDATAGLGRDAMVLAALGARVTLIERHPVIAALLADGLRRARRSHPELAARLHLVEADSLQWLAELTPAERPEVICLDPMYPAGSTRGAVRKDLQALRELPDWPGLAPVDEVALLALARASATARVVVKRPGRAAPLAGKAPDWQLPGRSTRFDVYRGLAGD</sequence>
<protein>
    <recommendedName>
        <fullName evidence="1">Ribosomal RNA small subunit methyltransferase J</fullName>
        <ecNumber evidence="1">2.1.1.242</ecNumber>
    </recommendedName>
    <alternativeName>
        <fullName evidence="1">16S rRNA m2G1516 methyltransferase</fullName>
    </alternativeName>
    <alternativeName>
        <fullName evidence="1">rRNA (guanine-N(2)-)-methyltransferase</fullName>
    </alternativeName>
</protein>
<gene>
    <name evidence="1" type="primary">rsmJ</name>
    <name type="ordered locus">Mlg_2240</name>
</gene>